<sequence>MSGRGKQGGKARAKAKSRSSRAGLQFPVGRVHRLLRKGNYAERVGAGAPVYLAAVLEYLTAEILELAGNPARDNKKTRIIPRHLQLAIRNDEELNKLLGKVTIAQGGVLPNIQAVLLPKKTDSHKAKAK</sequence>
<protein>
    <recommendedName>
        <fullName>Histone H2A-III</fullName>
    </recommendedName>
</protein>
<organism>
    <name type="scientific">Gallus gallus</name>
    <name type="common">Chicken</name>
    <dbReference type="NCBI Taxonomy" id="9031"/>
    <lineage>
        <taxon>Eukaryota</taxon>
        <taxon>Metazoa</taxon>
        <taxon>Chordata</taxon>
        <taxon>Craniata</taxon>
        <taxon>Vertebrata</taxon>
        <taxon>Euteleostomi</taxon>
        <taxon>Archelosauria</taxon>
        <taxon>Archosauria</taxon>
        <taxon>Dinosauria</taxon>
        <taxon>Saurischia</taxon>
        <taxon>Theropoda</taxon>
        <taxon>Coelurosauria</taxon>
        <taxon>Aves</taxon>
        <taxon>Neognathae</taxon>
        <taxon>Galloanserae</taxon>
        <taxon>Galliformes</taxon>
        <taxon>Phasianidae</taxon>
        <taxon>Phasianinae</taxon>
        <taxon>Gallus</taxon>
    </lineage>
</organism>
<reference key="1">
    <citation type="journal article" date="1993" name="Gene">
        <title>Presence of particular transcription regulatory elements in the 5'-intergenic region shared by the chicken H2A-III and H2B-V pair.</title>
        <authorList>
            <person name="Ohshige T."/>
            <person name="Takechi S."/>
            <person name="Nakayama T."/>
        </authorList>
    </citation>
    <scope>NUCLEOTIDE SEQUENCE [GENOMIC DNA]</scope>
</reference>
<reference key="2">
    <citation type="journal article" date="1988" name="Nucleic Acids Res.">
        <title>Conservation of histone H2A/H2B intergene regions: a role for the H2B specific element in divergent transcription.</title>
        <authorList>
            <person name="Sturm R.A."/>
            <person name="Dalton S."/>
            <person name="Wells J.R.E."/>
        </authorList>
    </citation>
    <scope>NUCLEOTIDE SEQUENCE [GENOMIC DNA] OF 1-25</scope>
</reference>
<reference key="3">
    <citation type="journal article" date="2003" name="J. Chromatogr. B">
        <title>Analysis of core histones by liquid chromatography-mass spectrometry and peptide mapping.</title>
        <authorList>
            <person name="Zhang K."/>
            <person name="Tang H."/>
        </authorList>
    </citation>
    <scope>PROTEIN SEQUENCE OF 5-12</scope>
    <scope>ACETYLATION AT LYS-6 AND LYS-10</scope>
    <scope>IDENTIFICATION BY MASS SPECTROMETRY</scope>
</reference>
<reference key="4">
    <citation type="journal article" date="1989" name="Biochemistry">
        <title>Ubiquitinated histone H2B is preferentially located in transcriptionally active chromatin.</title>
        <authorList>
            <person name="Nickel B.E."/>
            <person name="Allis C.D."/>
            <person name="Davie J.R."/>
        </authorList>
    </citation>
    <scope>UBIQUITINATION</scope>
</reference>
<proteinExistence type="evidence at protein level"/>
<dbReference type="EMBL" id="D11054">
    <property type="protein sequence ID" value="BAA01797.1"/>
    <property type="molecule type" value="Genomic_DNA"/>
</dbReference>
<dbReference type="EMBL" id="X07764">
    <property type="protein sequence ID" value="CAA30591.1"/>
    <property type="molecule type" value="Genomic_DNA"/>
</dbReference>
<dbReference type="EMBL" id="X07765">
    <property type="protein sequence ID" value="CAA30593.1"/>
    <property type="molecule type" value="Genomic_DNA"/>
</dbReference>
<dbReference type="SMR" id="P35062"/>
<dbReference type="FunCoup" id="P35062">
    <property type="interactions" value="722"/>
</dbReference>
<dbReference type="iPTMnet" id="P35062"/>
<dbReference type="VEuPathDB" id="HostDB:geneid_417947"/>
<dbReference type="InParanoid" id="P35062"/>
<dbReference type="Proteomes" id="UP000000539">
    <property type="component" value="Unassembled WGS sequence"/>
</dbReference>
<dbReference type="GO" id="GO:0000786">
    <property type="term" value="C:nucleosome"/>
    <property type="evidence" value="ECO:0000318"/>
    <property type="project" value="GO_Central"/>
</dbReference>
<dbReference type="GO" id="GO:0005634">
    <property type="term" value="C:nucleus"/>
    <property type="evidence" value="ECO:0000318"/>
    <property type="project" value="GO_Central"/>
</dbReference>
<dbReference type="GO" id="GO:0003677">
    <property type="term" value="F:DNA binding"/>
    <property type="evidence" value="ECO:0007669"/>
    <property type="project" value="UniProtKB-KW"/>
</dbReference>
<dbReference type="GO" id="GO:0046982">
    <property type="term" value="F:protein heterodimerization activity"/>
    <property type="evidence" value="ECO:0007669"/>
    <property type="project" value="InterPro"/>
</dbReference>
<dbReference type="GO" id="GO:0030527">
    <property type="term" value="F:structural constituent of chromatin"/>
    <property type="evidence" value="ECO:0000318"/>
    <property type="project" value="GO_Central"/>
</dbReference>
<dbReference type="GO" id="GO:0031507">
    <property type="term" value="P:heterochromatin formation"/>
    <property type="evidence" value="ECO:0000318"/>
    <property type="project" value="GO_Central"/>
</dbReference>
<dbReference type="CDD" id="cd00074">
    <property type="entry name" value="HFD_H2A"/>
    <property type="match status" value="1"/>
</dbReference>
<dbReference type="FunFam" id="1.10.20.10:FF:000004">
    <property type="entry name" value="Histone H2A"/>
    <property type="match status" value="1"/>
</dbReference>
<dbReference type="Gene3D" id="1.10.20.10">
    <property type="entry name" value="Histone, subunit A"/>
    <property type="match status" value="1"/>
</dbReference>
<dbReference type="InterPro" id="IPR009072">
    <property type="entry name" value="Histone-fold"/>
</dbReference>
<dbReference type="InterPro" id="IPR002119">
    <property type="entry name" value="Histone_H2A"/>
</dbReference>
<dbReference type="InterPro" id="IPR007125">
    <property type="entry name" value="Histone_H2A/H2B/H3"/>
</dbReference>
<dbReference type="InterPro" id="IPR032454">
    <property type="entry name" value="Histone_H2A_C"/>
</dbReference>
<dbReference type="InterPro" id="IPR032458">
    <property type="entry name" value="Histone_H2A_CS"/>
</dbReference>
<dbReference type="PANTHER" id="PTHR23430">
    <property type="entry name" value="HISTONE H2A"/>
    <property type="match status" value="1"/>
</dbReference>
<dbReference type="Pfam" id="PF00125">
    <property type="entry name" value="Histone"/>
    <property type="match status" value="1"/>
</dbReference>
<dbReference type="Pfam" id="PF16211">
    <property type="entry name" value="Histone_H2A_C"/>
    <property type="match status" value="1"/>
</dbReference>
<dbReference type="PRINTS" id="PR00620">
    <property type="entry name" value="HISTONEH2A"/>
</dbReference>
<dbReference type="SMART" id="SM00414">
    <property type="entry name" value="H2A"/>
    <property type="match status" value="1"/>
</dbReference>
<dbReference type="SUPFAM" id="SSF47113">
    <property type="entry name" value="Histone-fold"/>
    <property type="match status" value="1"/>
</dbReference>
<dbReference type="PROSITE" id="PS00046">
    <property type="entry name" value="HISTONE_H2A"/>
    <property type="match status" value="1"/>
</dbReference>
<comment type="function">
    <text>Core component of nucleosome. Nucleosomes wrap and compact DNA into chromatin, limiting DNA accessibility to the cellular machineries which require DNA as a template. Histones thereby play a central role in transcription regulation, DNA repair, DNA replication and chromosomal stability. DNA accessibility is regulated via a complex set of post-translational modifications of histones, also called histone code, and nucleosome remodeling.</text>
</comment>
<comment type="subunit">
    <text>The nucleosome is a histone octamer containing two molecules each of H2A, H2B, H3 and H4 assembled in one H3-H4 heterotetramer and two H2A-H2B heterodimers. The octamer wraps approximately 147 bp of DNA.</text>
</comment>
<comment type="subcellular location">
    <subcellularLocation>
        <location>Nucleus</location>
    </subcellularLocation>
    <subcellularLocation>
        <location>Chromosome</location>
    </subcellularLocation>
</comment>
<comment type="PTM">
    <text evidence="1">Monoubiquitination of Lys-120 (H2AK119Ub) gives a specific tag for epigenetic transcriptional repression. Following DNA double-strand breaks (DSBs), it is ubiquitinated through 'Lys-63' linkage of ubiquitin moieties, leading to the recruitment of repair proteins to sites of DNA damage. H2AK119Ub and ionizing radiation-induced 'Lys-63'-linked ubiquitination are distinct events (By similarity).</text>
</comment>
<comment type="PTM">
    <text evidence="1">Phosphorylation on Ser-2 is enhanced during mitosis. Phosphorylation on Ser-2 directly represses transcription (By similarity).</text>
</comment>
<comment type="PTM">
    <text evidence="1">Glutamine methylation at Gln-105 (H2AQ104me) by FBL is specifically dedicated to polymerase I. It is present at 35S ribosomal DNA locus and impairs binding of the FACT complex (By similarity).</text>
</comment>
<comment type="similarity">
    <text evidence="6">Belongs to the histone H2A family.</text>
</comment>
<name>H2A3_CHICK</name>
<feature type="initiator methionine" description="Removed" evidence="1">
    <location>
        <position position="1"/>
    </location>
</feature>
<feature type="chain" id="PRO_0000055214" description="Histone H2A-III">
    <location>
        <begin position="2"/>
        <end position="129"/>
    </location>
</feature>
<feature type="region of interest" description="Disordered" evidence="4">
    <location>
        <begin position="1"/>
        <end position="22"/>
    </location>
</feature>
<feature type="compositionally biased region" description="Basic residues" evidence="4">
    <location>
        <begin position="7"/>
        <end position="19"/>
    </location>
</feature>
<feature type="modified residue" description="N-acetylserine" evidence="1">
    <location>
        <position position="2"/>
    </location>
</feature>
<feature type="modified residue" description="Phosphoserine" evidence="1">
    <location>
        <position position="2"/>
    </location>
</feature>
<feature type="modified residue" description="N6-(2-hydroxyisobutyryl)lysine" evidence="3">
    <location>
        <position position="6"/>
    </location>
</feature>
<feature type="modified residue" description="N6-acetyllysine" evidence="5">
    <location>
        <position position="6"/>
    </location>
</feature>
<feature type="modified residue" description="N6-(2-hydroxyisobutyryl)lysine; alternate" evidence="3">
    <location>
        <position position="10"/>
    </location>
</feature>
<feature type="modified residue" description="N6-acetyllysine" evidence="5">
    <location>
        <position position="10"/>
    </location>
</feature>
<feature type="modified residue" description="N6-lactoyllysine; alternate" evidence="2">
    <location>
        <position position="10"/>
    </location>
</feature>
<feature type="modified residue" description="N6-succinyllysine" evidence="3">
    <location>
        <position position="10"/>
    </location>
</feature>
<feature type="modified residue" description="N6-(2-hydroxyisobutyryl)lysine; alternate" evidence="3">
    <location>
        <position position="37"/>
    </location>
</feature>
<feature type="modified residue" description="N6-(2-hydroxyisobutyryl)lysine" evidence="3">
    <location>
        <position position="75"/>
    </location>
</feature>
<feature type="modified residue" description="N6-(2-hydroxyisobutyryl)lysine" evidence="3">
    <location>
        <position position="76"/>
    </location>
</feature>
<feature type="modified residue" description="N6-(2-hydroxyisobutyryl)lysine; alternate" evidence="3">
    <location>
        <position position="96"/>
    </location>
</feature>
<feature type="modified residue" description="N6-glutaryllysine; alternate" evidence="3">
    <location>
        <position position="96"/>
    </location>
</feature>
<feature type="modified residue" description="N6-succinyllysine" evidence="3">
    <location>
        <position position="96"/>
    </location>
</feature>
<feature type="modified residue" description="N6-glutaryllysine" evidence="3">
    <location>
        <position position="100"/>
    </location>
</feature>
<feature type="modified residue" description="N5-methylglutamine" evidence="1">
    <location>
        <position position="105"/>
    </location>
</feature>
<feature type="modified residue" description="N6-(2-hydroxyisobutyryl)lysine; alternate" evidence="3">
    <location>
        <position position="119"/>
    </location>
</feature>
<feature type="modified residue" description="N6-glutaryllysine; alternate" evidence="3">
    <location>
        <position position="119"/>
    </location>
</feature>
<feature type="modified residue" description="N6-glutaryllysine; alternate" evidence="3">
    <location>
        <position position="120"/>
    </location>
</feature>
<feature type="cross-link" description="Glycyl lysine isopeptide (Lys-Gly) (interchain with G-Cter in ubiquitin)" evidence="1">
    <location>
        <position position="14"/>
    </location>
</feature>
<feature type="cross-link" description="Glycyl lysine isopeptide (Lys-Gly) (interchain with G-Cter in ubiquitin)" evidence="1">
    <location>
        <position position="16"/>
    </location>
</feature>
<feature type="cross-link" description="Glycyl lysine isopeptide (Lys-Gly) (interchain with G-Cter in ubiquitin)" evidence="7">
    <location>
        <position position="120"/>
    </location>
</feature>
<keyword id="KW-0007">Acetylation</keyword>
<keyword id="KW-0158">Chromosome</keyword>
<keyword id="KW-0903">Direct protein sequencing</keyword>
<keyword id="KW-0238">DNA-binding</keyword>
<keyword id="KW-0379">Hydroxylation</keyword>
<keyword id="KW-1017">Isopeptide bond</keyword>
<keyword id="KW-0488">Methylation</keyword>
<keyword id="KW-0544">Nucleosome core</keyword>
<keyword id="KW-0539">Nucleus</keyword>
<keyword id="KW-0597">Phosphoprotein</keyword>
<keyword id="KW-1185">Reference proteome</keyword>
<keyword id="KW-0832">Ubl conjugation</keyword>
<evidence type="ECO:0000250" key="1"/>
<evidence type="ECO:0000250" key="2">
    <source>
        <dbReference type="UniProtKB" id="P0C0S5"/>
    </source>
</evidence>
<evidence type="ECO:0000250" key="3">
    <source>
        <dbReference type="UniProtKB" id="P0C0S8"/>
    </source>
</evidence>
<evidence type="ECO:0000256" key="4">
    <source>
        <dbReference type="SAM" id="MobiDB-lite"/>
    </source>
</evidence>
<evidence type="ECO:0000269" key="5">
    <source>
    </source>
</evidence>
<evidence type="ECO:0000305" key="6"/>
<evidence type="ECO:0000305" key="7">
    <source>
    </source>
</evidence>
<accession>P35062</accession>
<accession>Q92016</accession>